<feature type="chain" id="PRO_1000084752" description="Probable tRNA pseudouridine synthase D">
    <location>
        <begin position="1"/>
        <end position="390"/>
    </location>
</feature>
<feature type="domain" description="TRUD" evidence="1">
    <location>
        <begin position="166"/>
        <end position="353"/>
    </location>
</feature>
<feature type="active site" description="Nucleophile" evidence="1">
    <location>
        <position position="93"/>
    </location>
</feature>
<sequence>MPLNIEKYILKTNRFGGTLKKYPEDFIVEEIMPDGTVLEVGKEIDFLDETPWNGSFIHFTLEKRNWNTMDALSAIVRATKTKRKNFGFAGTKDKFAVTTQRMGCFGLKKEQLESVKIPEIIIKDIQKSNKKLRMGDLFGNRFTINIRDIEKKYMELENLSDLKLDHVLNYFGIQRFGLKRPITHIVGKFIYERDFESAFYTYCGTPISETGDEKEARELVDSGNFKGALKLFSKGNEYEKRLIQQYFKYKDFKMAFTALPPQLNSMFVNAYQAYLFNEMVNERYNFGFEPLTGDILEDNIPTGALIGYNTEFGKGIQGEIEKEIFNRENIDLKKFKIEDFGNFYGTRRKLITPVYDFKSEFKEKVLTLSFKLERGNYATIVTREFTGNLG</sequence>
<protein>
    <recommendedName>
        <fullName evidence="1">Probable tRNA pseudouridine synthase D</fullName>
        <ecNumber evidence="1">5.4.99.27</ecNumber>
    </recommendedName>
    <alternativeName>
        <fullName evidence="1">tRNA pseudouridine(13) synthase</fullName>
    </alternativeName>
    <alternativeName>
        <fullName evidence="1">tRNA pseudouridylate synthase D</fullName>
    </alternativeName>
    <alternativeName>
        <fullName evidence="1">tRNA-uridine isomerase D</fullName>
    </alternativeName>
</protein>
<gene>
    <name evidence="1" type="primary">truD</name>
    <name type="ordered locus">Mevan_1488</name>
</gene>
<keyword id="KW-0413">Isomerase</keyword>
<keyword id="KW-0819">tRNA processing</keyword>
<accession>A6USB0</accession>
<evidence type="ECO:0000255" key="1">
    <source>
        <dbReference type="HAMAP-Rule" id="MF_01082"/>
    </source>
</evidence>
<organism>
    <name type="scientific">Methanococcus vannielii (strain ATCC 35089 / DSM 1224 / JCM 13029 / OCM 148 / SB)</name>
    <dbReference type="NCBI Taxonomy" id="406327"/>
    <lineage>
        <taxon>Archaea</taxon>
        <taxon>Methanobacteriati</taxon>
        <taxon>Methanobacteriota</taxon>
        <taxon>Methanomada group</taxon>
        <taxon>Methanococci</taxon>
        <taxon>Methanococcales</taxon>
        <taxon>Methanococcaceae</taxon>
        <taxon>Methanococcus</taxon>
    </lineage>
</organism>
<comment type="function">
    <text evidence="1">Could be responsible for synthesis of pseudouridine from uracil-13 in transfer RNAs.</text>
</comment>
<comment type="catalytic activity">
    <reaction evidence="1">
        <text>uridine(13) in tRNA = pseudouridine(13) in tRNA</text>
        <dbReference type="Rhea" id="RHEA:42540"/>
        <dbReference type="Rhea" id="RHEA-COMP:10105"/>
        <dbReference type="Rhea" id="RHEA-COMP:10106"/>
        <dbReference type="ChEBI" id="CHEBI:65314"/>
        <dbReference type="ChEBI" id="CHEBI:65315"/>
        <dbReference type="EC" id="5.4.99.27"/>
    </reaction>
</comment>
<comment type="similarity">
    <text evidence="1">Belongs to the pseudouridine synthase TruD family.</text>
</comment>
<name>TRUD_METVS</name>
<proteinExistence type="inferred from homology"/>
<dbReference type="EC" id="5.4.99.27" evidence="1"/>
<dbReference type="EMBL" id="CP000742">
    <property type="protein sequence ID" value="ABR55382.1"/>
    <property type="molecule type" value="Genomic_DNA"/>
</dbReference>
<dbReference type="SMR" id="A6USB0"/>
<dbReference type="STRING" id="406327.Mevan_1488"/>
<dbReference type="KEGG" id="mvn:Mevan_1488"/>
<dbReference type="eggNOG" id="arCOG04252">
    <property type="taxonomic scope" value="Archaea"/>
</dbReference>
<dbReference type="HOGENOM" id="CLU_005281_4_1_2"/>
<dbReference type="Proteomes" id="UP000001107">
    <property type="component" value="Chromosome"/>
</dbReference>
<dbReference type="GO" id="GO:0003723">
    <property type="term" value="F:RNA binding"/>
    <property type="evidence" value="ECO:0007669"/>
    <property type="project" value="InterPro"/>
</dbReference>
<dbReference type="GO" id="GO:0160150">
    <property type="term" value="F:tRNA pseudouridine(13) synthase activity"/>
    <property type="evidence" value="ECO:0007669"/>
    <property type="project" value="UniProtKB-EC"/>
</dbReference>
<dbReference type="GO" id="GO:0031119">
    <property type="term" value="P:tRNA pseudouridine synthesis"/>
    <property type="evidence" value="ECO:0007669"/>
    <property type="project" value="UniProtKB-UniRule"/>
</dbReference>
<dbReference type="Gene3D" id="3.30.2350.20">
    <property type="entry name" value="TruD, catalytic domain"/>
    <property type="match status" value="3"/>
</dbReference>
<dbReference type="HAMAP" id="MF_01082">
    <property type="entry name" value="TruD"/>
    <property type="match status" value="1"/>
</dbReference>
<dbReference type="InterPro" id="IPR020103">
    <property type="entry name" value="PsdUridine_synth_cat_dom_sf"/>
</dbReference>
<dbReference type="InterPro" id="IPR001656">
    <property type="entry name" value="PsdUridine_synth_TruD"/>
</dbReference>
<dbReference type="InterPro" id="IPR011760">
    <property type="entry name" value="PsdUridine_synth_TruD_insert"/>
</dbReference>
<dbReference type="InterPro" id="IPR042214">
    <property type="entry name" value="TruD_catalytic"/>
</dbReference>
<dbReference type="NCBIfam" id="TIGR00094">
    <property type="entry name" value="tRNA_TruD_broad"/>
    <property type="match status" value="1"/>
</dbReference>
<dbReference type="PANTHER" id="PTHR13326:SF21">
    <property type="entry name" value="PSEUDOURIDYLATE SYNTHASE PUS7L"/>
    <property type="match status" value="1"/>
</dbReference>
<dbReference type="PANTHER" id="PTHR13326">
    <property type="entry name" value="TRNA PSEUDOURIDINE SYNTHASE D"/>
    <property type="match status" value="1"/>
</dbReference>
<dbReference type="Pfam" id="PF01142">
    <property type="entry name" value="TruD"/>
    <property type="match status" value="2"/>
</dbReference>
<dbReference type="PIRSF" id="PIRSF037016">
    <property type="entry name" value="Pseudouridin_synth_euk_prd"/>
    <property type="match status" value="1"/>
</dbReference>
<dbReference type="SUPFAM" id="SSF55120">
    <property type="entry name" value="Pseudouridine synthase"/>
    <property type="match status" value="1"/>
</dbReference>
<dbReference type="PROSITE" id="PS50984">
    <property type="entry name" value="TRUD"/>
    <property type="match status" value="1"/>
</dbReference>
<reference key="1">
    <citation type="submission" date="2007-06" db="EMBL/GenBank/DDBJ databases">
        <title>Complete sequence of Methanococcus vannielii SB.</title>
        <authorList>
            <consortium name="US DOE Joint Genome Institute"/>
            <person name="Copeland A."/>
            <person name="Lucas S."/>
            <person name="Lapidus A."/>
            <person name="Barry K."/>
            <person name="Glavina del Rio T."/>
            <person name="Dalin E."/>
            <person name="Tice H."/>
            <person name="Pitluck S."/>
            <person name="Chain P."/>
            <person name="Malfatti S."/>
            <person name="Shin M."/>
            <person name="Vergez L."/>
            <person name="Schmutz J."/>
            <person name="Larimer F."/>
            <person name="Land M."/>
            <person name="Hauser L."/>
            <person name="Kyrpides N."/>
            <person name="Anderson I."/>
            <person name="Sieprawska-Lupa M."/>
            <person name="Whitman W.B."/>
            <person name="Richardson P."/>
        </authorList>
    </citation>
    <scope>NUCLEOTIDE SEQUENCE [LARGE SCALE GENOMIC DNA]</scope>
    <source>
        <strain>ATCC 35089 / DSM 1224 / JCM 13029 / OCM 148 / SB</strain>
    </source>
</reference>